<proteinExistence type="inferred from homology"/>
<protein>
    <recommendedName>
        <fullName evidence="1">RNA pyrophosphohydrolase</fullName>
        <ecNumber evidence="1">3.6.1.-</ecNumber>
    </recommendedName>
    <alternativeName>
        <fullName evidence="1">(Di)nucleoside polyphosphate hydrolase</fullName>
    </alternativeName>
</protein>
<keyword id="KW-0378">Hydrolase</keyword>
<evidence type="ECO:0000255" key="1">
    <source>
        <dbReference type="HAMAP-Rule" id="MF_00298"/>
    </source>
</evidence>
<comment type="function">
    <text evidence="1">Accelerates the degradation of transcripts by removing pyrophosphate from the 5'-end of triphosphorylated RNA, leading to a more labile monophosphorylated state that can stimulate subsequent ribonuclease cleavage.</text>
</comment>
<comment type="cofactor">
    <cofactor evidence="1">
        <name>a divalent metal cation</name>
        <dbReference type="ChEBI" id="CHEBI:60240"/>
    </cofactor>
</comment>
<comment type="similarity">
    <text evidence="1">Belongs to the Nudix hydrolase family. RppH subfamily.</text>
</comment>
<accession>B1IU14</accession>
<reference key="1">
    <citation type="submission" date="2008-02" db="EMBL/GenBank/DDBJ databases">
        <title>Complete sequence of Escherichia coli C str. ATCC 8739.</title>
        <authorList>
            <person name="Copeland A."/>
            <person name="Lucas S."/>
            <person name="Lapidus A."/>
            <person name="Glavina del Rio T."/>
            <person name="Dalin E."/>
            <person name="Tice H."/>
            <person name="Bruce D."/>
            <person name="Goodwin L."/>
            <person name="Pitluck S."/>
            <person name="Kiss H."/>
            <person name="Brettin T."/>
            <person name="Detter J.C."/>
            <person name="Han C."/>
            <person name="Kuske C.R."/>
            <person name="Schmutz J."/>
            <person name="Larimer F."/>
            <person name="Land M."/>
            <person name="Hauser L."/>
            <person name="Kyrpides N."/>
            <person name="Mikhailova N."/>
            <person name="Ingram L."/>
            <person name="Richardson P."/>
        </authorList>
    </citation>
    <scope>NUCLEOTIDE SEQUENCE [LARGE SCALE GENOMIC DNA]</scope>
    <source>
        <strain>ATCC 8739 / DSM 1576 / NBRC 3972 / NCIMB 8545 / WDCM 00012 / Crooks</strain>
    </source>
</reference>
<sequence>MIDDDGYRPNVGIVICNRQGQVMWARRFGQHSWQFPQGGINPGESAEQAMYRELFEEVGLSRKDVRILASTRNWLRYKLPKRLVRWDTKPVCIGQKQKWFLLQLVSGDAEINMQTSSTPEFDGWRWVSYWYPVRQVVSFKRDVYRRVMKEFASVVMSLQENTPKPQNASAYRRKRG</sequence>
<organism>
    <name type="scientific">Escherichia coli (strain ATCC 8739 / DSM 1576 / NBRC 3972 / NCIMB 8545 / WDCM 00012 / Crooks)</name>
    <dbReference type="NCBI Taxonomy" id="481805"/>
    <lineage>
        <taxon>Bacteria</taxon>
        <taxon>Pseudomonadati</taxon>
        <taxon>Pseudomonadota</taxon>
        <taxon>Gammaproteobacteria</taxon>
        <taxon>Enterobacterales</taxon>
        <taxon>Enterobacteriaceae</taxon>
        <taxon>Escherichia</taxon>
    </lineage>
</organism>
<name>RPPH_ECOLC</name>
<feature type="chain" id="PRO_1000078961" description="RNA pyrophosphohydrolase">
    <location>
        <begin position="1"/>
        <end position="176"/>
    </location>
</feature>
<feature type="domain" description="Nudix hydrolase" evidence="1">
    <location>
        <begin position="6"/>
        <end position="149"/>
    </location>
</feature>
<feature type="short sequence motif" description="Nudix box">
    <location>
        <begin position="38"/>
        <end position="59"/>
    </location>
</feature>
<dbReference type="EC" id="3.6.1.-" evidence="1"/>
<dbReference type="EMBL" id="CP000946">
    <property type="protein sequence ID" value="ACA76554.1"/>
    <property type="molecule type" value="Genomic_DNA"/>
</dbReference>
<dbReference type="RefSeq" id="WP_000564489.1">
    <property type="nucleotide sequence ID" value="NZ_MTFT01000004.1"/>
</dbReference>
<dbReference type="BMRB" id="B1IU14"/>
<dbReference type="SMR" id="B1IU14"/>
<dbReference type="GeneID" id="75203778"/>
<dbReference type="KEGG" id="ecl:EcolC_0885"/>
<dbReference type="HOGENOM" id="CLU_087195_3_2_6"/>
<dbReference type="GO" id="GO:0005737">
    <property type="term" value="C:cytoplasm"/>
    <property type="evidence" value="ECO:0007669"/>
    <property type="project" value="TreeGrafter"/>
</dbReference>
<dbReference type="GO" id="GO:0034353">
    <property type="term" value="F:mRNA 5'-diphosphatase activity"/>
    <property type="evidence" value="ECO:0007669"/>
    <property type="project" value="TreeGrafter"/>
</dbReference>
<dbReference type="GO" id="GO:0006402">
    <property type="term" value="P:mRNA catabolic process"/>
    <property type="evidence" value="ECO:0007669"/>
    <property type="project" value="TreeGrafter"/>
</dbReference>
<dbReference type="CDD" id="cd03671">
    <property type="entry name" value="NUDIX_Ap4A_hydrolase_plant_like"/>
    <property type="match status" value="1"/>
</dbReference>
<dbReference type="FunFam" id="3.90.79.10:FF:000001">
    <property type="entry name" value="RNA pyrophosphohydrolase"/>
    <property type="match status" value="1"/>
</dbReference>
<dbReference type="Gene3D" id="3.90.79.10">
    <property type="entry name" value="Nucleoside Triphosphate Pyrophosphohydrolase"/>
    <property type="match status" value="1"/>
</dbReference>
<dbReference type="HAMAP" id="MF_00298">
    <property type="entry name" value="Nudix_RppH"/>
    <property type="match status" value="1"/>
</dbReference>
<dbReference type="InterPro" id="IPR020476">
    <property type="entry name" value="Nudix_hydrolase"/>
</dbReference>
<dbReference type="InterPro" id="IPR015797">
    <property type="entry name" value="NUDIX_hydrolase-like_dom_sf"/>
</dbReference>
<dbReference type="InterPro" id="IPR020084">
    <property type="entry name" value="NUDIX_hydrolase_CS"/>
</dbReference>
<dbReference type="InterPro" id="IPR000086">
    <property type="entry name" value="NUDIX_hydrolase_dom"/>
</dbReference>
<dbReference type="InterPro" id="IPR022927">
    <property type="entry name" value="RppH"/>
</dbReference>
<dbReference type="NCBIfam" id="NF001934">
    <property type="entry name" value="PRK00714.1-1"/>
    <property type="match status" value="1"/>
</dbReference>
<dbReference type="NCBIfam" id="NF001937">
    <property type="entry name" value="PRK00714.1-4"/>
    <property type="match status" value="1"/>
</dbReference>
<dbReference type="NCBIfam" id="NF001938">
    <property type="entry name" value="PRK00714.1-5"/>
    <property type="match status" value="1"/>
</dbReference>
<dbReference type="PANTHER" id="PTHR23114">
    <property type="entry name" value="M7GPPPN-MRNA HYDROLASE"/>
    <property type="match status" value="1"/>
</dbReference>
<dbReference type="PANTHER" id="PTHR23114:SF17">
    <property type="entry name" value="M7GPPPN-MRNA HYDROLASE"/>
    <property type="match status" value="1"/>
</dbReference>
<dbReference type="Pfam" id="PF00293">
    <property type="entry name" value="NUDIX"/>
    <property type="match status" value="1"/>
</dbReference>
<dbReference type="PRINTS" id="PR00502">
    <property type="entry name" value="NUDIXFAMILY"/>
</dbReference>
<dbReference type="SUPFAM" id="SSF55811">
    <property type="entry name" value="Nudix"/>
    <property type="match status" value="1"/>
</dbReference>
<dbReference type="PROSITE" id="PS51462">
    <property type="entry name" value="NUDIX"/>
    <property type="match status" value="1"/>
</dbReference>
<dbReference type="PROSITE" id="PS00893">
    <property type="entry name" value="NUDIX_BOX"/>
    <property type="match status" value="1"/>
</dbReference>
<gene>
    <name evidence="1" type="primary">rppH</name>
    <name evidence="1" type="synonym">nudH</name>
    <name type="ordered locus">EcolC_0885</name>
</gene>